<dbReference type="EMBL" id="AE001363">
    <property type="protein sequence ID" value="AAD18781.1"/>
    <property type="molecule type" value="Genomic_DNA"/>
</dbReference>
<dbReference type="EMBL" id="AE002161">
    <property type="protein sequence ID" value="AAF37988.1"/>
    <property type="molecule type" value="Genomic_DNA"/>
</dbReference>
<dbReference type="EMBL" id="BA000008">
    <property type="protein sequence ID" value="BAA98849.1"/>
    <property type="molecule type" value="Genomic_DNA"/>
</dbReference>
<dbReference type="EMBL" id="AE009440">
    <property type="protein sequence ID" value="AAP98597.1"/>
    <property type="molecule type" value="Genomic_DNA"/>
</dbReference>
<dbReference type="PIR" id="D72055">
    <property type="entry name" value="D72055"/>
</dbReference>
<dbReference type="PIR" id="G86570">
    <property type="entry name" value="G86570"/>
</dbReference>
<dbReference type="RefSeq" id="NP_224838.1">
    <property type="nucleotide sequence ID" value="NC_000922.1"/>
</dbReference>
<dbReference type="RefSeq" id="WP_010883280.1">
    <property type="nucleotide sequence ID" value="NZ_LN847257.1"/>
</dbReference>
<dbReference type="SMR" id="Q9Z7R2"/>
<dbReference type="STRING" id="406984.CPK_ORF00042"/>
<dbReference type="GeneID" id="45050692"/>
<dbReference type="KEGG" id="cpa:CP_0105"/>
<dbReference type="KEGG" id="cpj:rl22"/>
<dbReference type="KEGG" id="cpn:CPn_0642"/>
<dbReference type="KEGG" id="cpt:CpB0668"/>
<dbReference type="PATRIC" id="fig|115713.3.peg.712"/>
<dbReference type="eggNOG" id="COG0091">
    <property type="taxonomic scope" value="Bacteria"/>
</dbReference>
<dbReference type="HOGENOM" id="CLU_083987_3_3_0"/>
<dbReference type="OrthoDB" id="9805969at2"/>
<dbReference type="Proteomes" id="UP000000583">
    <property type="component" value="Chromosome"/>
</dbReference>
<dbReference type="Proteomes" id="UP000000801">
    <property type="component" value="Chromosome"/>
</dbReference>
<dbReference type="GO" id="GO:0022625">
    <property type="term" value="C:cytosolic large ribosomal subunit"/>
    <property type="evidence" value="ECO:0007669"/>
    <property type="project" value="TreeGrafter"/>
</dbReference>
<dbReference type="GO" id="GO:0019843">
    <property type="term" value="F:rRNA binding"/>
    <property type="evidence" value="ECO:0007669"/>
    <property type="project" value="UniProtKB-UniRule"/>
</dbReference>
<dbReference type="GO" id="GO:0003735">
    <property type="term" value="F:structural constituent of ribosome"/>
    <property type="evidence" value="ECO:0007669"/>
    <property type="project" value="InterPro"/>
</dbReference>
<dbReference type="GO" id="GO:0006412">
    <property type="term" value="P:translation"/>
    <property type="evidence" value="ECO:0007669"/>
    <property type="project" value="UniProtKB-UniRule"/>
</dbReference>
<dbReference type="Gene3D" id="3.90.470.10">
    <property type="entry name" value="Ribosomal protein L22/L17"/>
    <property type="match status" value="1"/>
</dbReference>
<dbReference type="HAMAP" id="MF_01331_B">
    <property type="entry name" value="Ribosomal_uL22_B"/>
    <property type="match status" value="1"/>
</dbReference>
<dbReference type="InterPro" id="IPR001063">
    <property type="entry name" value="Ribosomal_uL22"/>
</dbReference>
<dbReference type="InterPro" id="IPR005727">
    <property type="entry name" value="Ribosomal_uL22_bac/chlpt-type"/>
</dbReference>
<dbReference type="InterPro" id="IPR047867">
    <property type="entry name" value="Ribosomal_uL22_bac/org-type"/>
</dbReference>
<dbReference type="InterPro" id="IPR036394">
    <property type="entry name" value="Ribosomal_uL22_sf"/>
</dbReference>
<dbReference type="NCBIfam" id="TIGR01044">
    <property type="entry name" value="rplV_bact"/>
    <property type="match status" value="1"/>
</dbReference>
<dbReference type="PANTHER" id="PTHR13501">
    <property type="entry name" value="CHLOROPLAST 50S RIBOSOMAL PROTEIN L22-RELATED"/>
    <property type="match status" value="1"/>
</dbReference>
<dbReference type="PANTHER" id="PTHR13501:SF8">
    <property type="entry name" value="LARGE RIBOSOMAL SUBUNIT PROTEIN UL22M"/>
    <property type="match status" value="1"/>
</dbReference>
<dbReference type="Pfam" id="PF00237">
    <property type="entry name" value="Ribosomal_L22"/>
    <property type="match status" value="1"/>
</dbReference>
<dbReference type="SUPFAM" id="SSF54843">
    <property type="entry name" value="Ribosomal protein L22"/>
    <property type="match status" value="1"/>
</dbReference>
<reference key="1">
    <citation type="journal article" date="1999" name="Nat. Genet.">
        <title>Comparative genomes of Chlamydia pneumoniae and C. trachomatis.</title>
        <authorList>
            <person name="Kalman S."/>
            <person name="Mitchell W.P."/>
            <person name="Marathe R."/>
            <person name="Lammel C.J."/>
            <person name="Fan J."/>
            <person name="Hyman R.W."/>
            <person name="Olinger L."/>
            <person name="Grimwood J."/>
            <person name="Davis R.W."/>
            <person name="Stephens R.S."/>
        </authorList>
    </citation>
    <scope>NUCLEOTIDE SEQUENCE [LARGE SCALE GENOMIC DNA]</scope>
    <source>
        <strain>CWL029</strain>
    </source>
</reference>
<reference key="2">
    <citation type="journal article" date="2000" name="Nucleic Acids Res.">
        <title>Genome sequences of Chlamydia trachomatis MoPn and Chlamydia pneumoniae AR39.</title>
        <authorList>
            <person name="Read T.D."/>
            <person name="Brunham R.C."/>
            <person name="Shen C."/>
            <person name="Gill S.R."/>
            <person name="Heidelberg J.F."/>
            <person name="White O."/>
            <person name="Hickey E.K."/>
            <person name="Peterson J.D."/>
            <person name="Utterback T.R."/>
            <person name="Berry K.J."/>
            <person name="Bass S."/>
            <person name="Linher K.D."/>
            <person name="Weidman J.F."/>
            <person name="Khouri H.M."/>
            <person name="Craven B."/>
            <person name="Bowman C."/>
            <person name="Dodson R.J."/>
            <person name="Gwinn M.L."/>
            <person name="Nelson W.C."/>
            <person name="DeBoy R.T."/>
            <person name="Kolonay J.F."/>
            <person name="McClarty G."/>
            <person name="Salzberg S.L."/>
            <person name="Eisen J.A."/>
            <person name="Fraser C.M."/>
        </authorList>
    </citation>
    <scope>NUCLEOTIDE SEQUENCE [LARGE SCALE GENOMIC DNA]</scope>
    <source>
        <strain>AR39</strain>
    </source>
</reference>
<reference key="3">
    <citation type="journal article" date="2000" name="Nucleic Acids Res.">
        <title>Comparison of whole genome sequences of Chlamydia pneumoniae J138 from Japan and CWL029 from USA.</title>
        <authorList>
            <person name="Shirai M."/>
            <person name="Hirakawa H."/>
            <person name="Kimoto M."/>
            <person name="Tabuchi M."/>
            <person name="Kishi F."/>
            <person name="Ouchi K."/>
            <person name="Shiba T."/>
            <person name="Ishii K."/>
            <person name="Hattori M."/>
            <person name="Kuhara S."/>
            <person name="Nakazawa T."/>
        </authorList>
    </citation>
    <scope>NUCLEOTIDE SEQUENCE [LARGE SCALE GENOMIC DNA]</scope>
    <source>
        <strain>J138</strain>
    </source>
</reference>
<reference key="4">
    <citation type="submission" date="2002-05" db="EMBL/GenBank/DDBJ databases">
        <title>The genome sequence of Chlamydia pneumoniae TW183 and comparison with other Chlamydia strains based on whole genome sequence analysis.</title>
        <authorList>
            <person name="Geng M.M."/>
            <person name="Schuhmacher A."/>
            <person name="Muehldorfer I."/>
            <person name="Bensch K.W."/>
            <person name="Schaefer K.P."/>
            <person name="Schneider S."/>
            <person name="Pohl T."/>
            <person name="Essig A."/>
            <person name="Marre R."/>
            <person name="Melchers K."/>
        </authorList>
    </citation>
    <scope>NUCLEOTIDE SEQUENCE [LARGE SCALE GENOMIC DNA]</scope>
    <source>
        <strain>TW-183</strain>
    </source>
</reference>
<comment type="function">
    <text evidence="1">This protein binds specifically to 23S rRNA; its binding is stimulated by other ribosomal proteins, e.g. L4, L17, and L20. It is important during the early stages of 50S assembly. It makes multiple contacts with different domains of the 23S rRNA in the assembled 50S subunit and ribosome (By similarity).</text>
</comment>
<comment type="function">
    <text evidence="1">The globular domain of the protein is located near the polypeptide exit tunnel on the outside of the subunit, while an extended beta-hairpin is found that lines the wall of the exit tunnel in the center of the 70S ribosome.</text>
</comment>
<comment type="subunit">
    <text evidence="1">Part of the 50S ribosomal subunit.</text>
</comment>
<comment type="similarity">
    <text evidence="1">Belongs to the universal ribosomal protein uL22 family.</text>
</comment>
<sequence length="111" mass="12428">MFKATARYIRVQPRKARLAAGLMRNLSVQEAEEQLGFSQLKAGRCLKKVLNSAVANAELHENIKRENLSVTEVRVDAGPVYKRSKSKSRGGRSPILKRTSHLTVIVGEKER</sequence>
<accession>Q9Z7R2</accession>
<accession>Q9JQ42</accession>
<evidence type="ECO:0000255" key="1">
    <source>
        <dbReference type="HAMAP-Rule" id="MF_01331"/>
    </source>
</evidence>
<evidence type="ECO:0000305" key="2"/>
<proteinExistence type="inferred from homology"/>
<gene>
    <name evidence="1" type="primary">rplV</name>
    <name type="synonym">rl22</name>
    <name type="ordered locus">CPn_0642</name>
    <name type="ordered locus">CP_0105</name>
    <name type="ordered locus">CpB0668</name>
</gene>
<organism>
    <name type="scientific">Chlamydia pneumoniae</name>
    <name type="common">Chlamydophila pneumoniae</name>
    <dbReference type="NCBI Taxonomy" id="83558"/>
    <lineage>
        <taxon>Bacteria</taxon>
        <taxon>Pseudomonadati</taxon>
        <taxon>Chlamydiota</taxon>
        <taxon>Chlamydiia</taxon>
        <taxon>Chlamydiales</taxon>
        <taxon>Chlamydiaceae</taxon>
        <taxon>Chlamydia/Chlamydophila group</taxon>
        <taxon>Chlamydia</taxon>
    </lineage>
</organism>
<feature type="chain" id="PRO_0000125138" description="Large ribosomal subunit protein uL22">
    <location>
        <begin position="1"/>
        <end position="111"/>
    </location>
</feature>
<protein>
    <recommendedName>
        <fullName evidence="1">Large ribosomal subunit protein uL22</fullName>
    </recommendedName>
    <alternativeName>
        <fullName evidence="2">50S ribosomal protein L22</fullName>
    </alternativeName>
</protein>
<keyword id="KW-0687">Ribonucleoprotein</keyword>
<keyword id="KW-0689">Ribosomal protein</keyword>
<keyword id="KW-0694">RNA-binding</keyword>
<keyword id="KW-0699">rRNA-binding</keyword>
<name>RL22_CHLPN</name>